<organism>
    <name type="scientific">Homo sapiens</name>
    <name type="common">Human</name>
    <dbReference type="NCBI Taxonomy" id="9606"/>
    <lineage>
        <taxon>Eukaryota</taxon>
        <taxon>Metazoa</taxon>
        <taxon>Chordata</taxon>
        <taxon>Craniata</taxon>
        <taxon>Vertebrata</taxon>
        <taxon>Euteleostomi</taxon>
        <taxon>Mammalia</taxon>
        <taxon>Eutheria</taxon>
        <taxon>Euarchontoglires</taxon>
        <taxon>Primates</taxon>
        <taxon>Haplorrhini</taxon>
        <taxon>Catarrhini</taxon>
        <taxon>Hominidae</taxon>
        <taxon>Homo</taxon>
    </lineage>
</organism>
<evidence type="ECO:0000256" key="1">
    <source>
        <dbReference type="SAM" id="MobiDB-lite"/>
    </source>
</evidence>
<evidence type="ECO:0000269" key="2">
    <source>
    </source>
</evidence>
<evidence type="ECO:0000269" key="3">
    <source>
    </source>
</evidence>
<evidence type="ECO:0000269" key="4">
    <source>
    </source>
</evidence>
<evidence type="ECO:0000269" key="5">
    <source>
    </source>
</evidence>
<evidence type="ECO:0000269" key="6">
    <source>
    </source>
</evidence>
<evidence type="ECO:0000269" key="7">
    <source>
    </source>
</evidence>
<evidence type="ECO:0000269" key="8">
    <source>
    </source>
</evidence>
<evidence type="ECO:0000269" key="9">
    <source>
    </source>
</evidence>
<evidence type="ECO:0000269" key="10">
    <source>
    </source>
</evidence>
<evidence type="ECO:0000269" key="11">
    <source>
    </source>
</evidence>
<evidence type="ECO:0000269" key="12">
    <source>
    </source>
</evidence>
<evidence type="ECO:0000269" key="13">
    <source>
    </source>
</evidence>
<evidence type="ECO:0000269" key="14">
    <source>
    </source>
</evidence>
<evidence type="ECO:0000305" key="15"/>
<evidence type="ECO:0007744" key="16">
    <source>
    </source>
</evidence>
<evidence type="ECO:0007744" key="17">
    <source>
    </source>
</evidence>
<evidence type="ECO:0007744" key="18">
    <source>
    </source>
</evidence>
<evidence type="ECO:0007829" key="19">
    <source>
        <dbReference type="PDB" id="1T6F"/>
    </source>
</evidence>
<evidence type="ECO:0007829" key="20">
    <source>
        <dbReference type="PDB" id="2LP0"/>
    </source>
</evidence>
<reference key="1">
    <citation type="journal article" date="1998" name="Cell">
        <title>Geminin, an inhibitor of DNA replication, is degraded during mitosis.</title>
        <authorList>
            <person name="McGarry T.J."/>
            <person name="Kirschner M.W."/>
        </authorList>
    </citation>
    <scope>NUCLEOTIDE SEQUENCE [MRNA]</scope>
    <scope>FUNCTION</scope>
    <scope>DEVELOPMENTAL STAGE</scope>
</reference>
<reference key="2">
    <citation type="journal article" date="2004" name="Nat. Genet.">
        <title>Complete sequencing and characterization of 21,243 full-length human cDNAs.</title>
        <authorList>
            <person name="Ota T."/>
            <person name="Suzuki Y."/>
            <person name="Nishikawa T."/>
            <person name="Otsuki T."/>
            <person name="Sugiyama T."/>
            <person name="Irie R."/>
            <person name="Wakamatsu A."/>
            <person name="Hayashi K."/>
            <person name="Sato H."/>
            <person name="Nagai K."/>
            <person name="Kimura K."/>
            <person name="Makita H."/>
            <person name="Sekine M."/>
            <person name="Obayashi M."/>
            <person name="Nishi T."/>
            <person name="Shibahara T."/>
            <person name="Tanaka T."/>
            <person name="Ishii S."/>
            <person name="Yamamoto J."/>
            <person name="Saito K."/>
            <person name="Kawai Y."/>
            <person name="Isono Y."/>
            <person name="Nakamura Y."/>
            <person name="Nagahari K."/>
            <person name="Murakami K."/>
            <person name="Yasuda T."/>
            <person name="Iwayanagi T."/>
            <person name="Wagatsuma M."/>
            <person name="Shiratori A."/>
            <person name="Sudo H."/>
            <person name="Hosoiri T."/>
            <person name="Kaku Y."/>
            <person name="Kodaira H."/>
            <person name="Kondo H."/>
            <person name="Sugawara M."/>
            <person name="Takahashi M."/>
            <person name="Kanda K."/>
            <person name="Yokoi T."/>
            <person name="Furuya T."/>
            <person name="Kikkawa E."/>
            <person name="Omura Y."/>
            <person name="Abe K."/>
            <person name="Kamihara K."/>
            <person name="Katsuta N."/>
            <person name="Sato K."/>
            <person name="Tanikawa M."/>
            <person name="Yamazaki M."/>
            <person name="Ninomiya K."/>
            <person name="Ishibashi T."/>
            <person name="Yamashita H."/>
            <person name="Murakawa K."/>
            <person name="Fujimori K."/>
            <person name="Tanai H."/>
            <person name="Kimata M."/>
            <person name="Watanabe M."/>
            <person name="Hiraoka S."/>
            <person name="Chiba Y."/>
            <person name="Ishida S."/>
            <person name="Ono Y."/>
            <person name="Takiguchi S."/>
            <person name="Watanabe S."/>
            <person name="Yosida M."/>
            <person name="Hotuta T."/>
            <person name="Kusano J."/>
            <person name="Kanehori K."/>
            <person name="Takahashi-Fujii A."/>
            <person name="Hara H."/>
            <person name="Tanase T.-O."/>
            <person name="Nomura Y."/>
            <person name="Togiya S."/>
            <person name="Komai F."/>
            <person name="Hara R."/>
            <person name="Takeuchi K."/>
            <person name="Arita M."/>
            <person name="Imose N."/>
            <person name="Musashino K."/>
            <person name="Yuuki H."/>
            <person name="Oshima A."/>
            <person name="Sasaki N."/>
            <person name="Aotsuka S."/>
            <person name="Yoshikawa Y."/>
            <person name="Matsunawa H."/>
            <person name="Ichihara T."/>
            <person name="Shiohata N."/>
            <person name="Sano S."/>
            <person name="Moriya S."/>
            <person name="Momiyama H."/>
            <person name="Satoh N."/>
            <person name="Takami S."/>
            <person name="Terashima Y."/>
            <person name="Suzuki O."/>
            <person name="Nakagawa S."/>
            <person name="Senoh A."/>
            <person name="Mizoguchi H."/>
            <person name="Goto Y."/>
            <person name="Shimizu F."/>
            <person name="Wakebe H."/>
            <person name="Hishigaki H."/>
            <person name="Watanabe T."/>
            <person name="Sugiyama A."/>
            <person name="Takemoto M."/>
            <person name="Kawakami B."/>
            <person name="Yamazaki M."/>
            <person name="Watanabe K."/>
            <person name="Kumagai A."/>
            <person name="Itakura S."/>
            <person name="Fukuzumi Y."/>
            <person name="Fujimori Y."/>
            <person name="Komiyama M."/>
            <person name="Tashiro H."/>
            <person name="Tanigami A."/>
            <person name="Fujiwara T."/>
            <person name="Ono T."/>
            <person name="Yamada K."/>
            <person name="Fujii Y."/>
            <person name="Ozaki K."/>
            <person name="Hirao M."/>
            <person name="Ohmori Y."/>
            <person name="Kawabata A."/>
            <person name="Hikiji T."/>
            <person name="Kobatake N."/>
            <person name="Inagaki H."/>
            <person name="Ikema Y."/>
            <person name="Okamoto S."/>
            <person name="Okitani R."/>
            <person name="Kawakami T."/>
            <person name="Noguchi S."/>
            <person name="Itoh T."/>
            <person name="Shigeta K."/>
            <person name="Senba T."/>
            <person name="Matsumura K."/>
            <person name="Nakajima Y."/>
            <person name="Mizuno T."/>
            <person name="Morinaga M."/>
            <person name="Sasaki M."/>
            <person name="Togashi T."/>
            <person name="Oyama M."/>
            <person name="Hata H."/>
            <person name="Watanabe M."/>
            <person name="Komatsu T."/>
            <person name="Mizushima-Sugano J."/>
            <person name="Satoh T."/>
            <person name="Shirai Y."/>
            <person name="Takahashi Y."/>
            <person name="Nakagawa K."/>
            <person name="Okumura K."/>
            <person name="Nagase T."/>
            <person name="Nomura N."/>
            <person name="Kikuchi H."/>
            <person name="Masuho Y."/>
            <person name="Yamashita R."/>
            <person name="Nakai K."/>
            <person name="Yada T."/>
            <person name="Nakamura Y."/>
            <person name="Ohara O."/>
            <person name="Isogai T."/>
            <person name="Sugano S."/>
        </authorList>
    </citation>
    <scope>NUCLEOTIDE SEQUENCE [LARGE SCALE MRNA]</scope>
    <scope>VARIANT THR-18</scope>
    <source>
        <tissue>Embryo</tissue>
    </source>
</reference>
<reference key="3">
    <citation type="journal article" date="2003" name="Nature">
        <title>The DNA sequence and analysis of human chromosome 6.</title>
        <authorList>
            <person name="Mungall A.J."/>
            <person name="Palmer S.A."/>
            <person name="Sims S.K."/>
            <person name="Edwards C.A."/>
            <person name="Ashurst J.L."/>
            <person name="Wilming L."/>
            <person name="Jones M.C."/>
            <person name="Horton R."/>
            <person name="Hunt S.E."/>
            <person name="Scott C.E."/>
            <person name="Gilbert J.G.R."/>
            <person name="Clamp M.E."/>
            <person name="Bethel G."/>
            <person name="Milne S."/>
            <person name="Ainscough R."/>
            <person name="Almeida J.P."/>
            <person name="Ambrose K.D."/>
            <person name="Andrews T.D."/>
            <person name="Ashwell R.I.S."/>
            <person name="Babbage A.K."/>
            <person name="Bagguley C.L."/>
            <person name="Bailey J."/>
            <person name="Banerjee R."/>
            <person name="Barker D.J."/>
            <person name="Barlow K.F."/>
            <person name="Bates K."/>
            <person name="Beare D.M."/>
            <person name="Beasley H."/>
            <person name="Beasley O."/>
            <person name="Bird C.P."/>
            <person name="Blakey S.E."/>
            <person name="Bray-Allen S."/>
            <person name="Brook J."/>
            <person name="Brown A.J."/>
            <person name="Brown J.Y."/>
            <person name="Burford D.C."/>
            <person name="Burrill W."/>
            <person name="Burton J."/>
            <person name="Carder C."/>
            <person name="Carter N.P."/>
            <person name="Chapman J.C."/>
            <person name="Clark S.Y."/>
            <person name="Clark G."/>
            <person name="Clee C.M."/>
            <person name="Clegg S."/>
            <person name="Cobley V."/>
            <person name="Collier R.E."/>
            <person name="Collins J.E."/>
            <person name="Colman L.K."/>
            <person name="Corby N.R."/>
            <person name="Coville G.J."/>
            <person name="Culley K.M."/>
            <person name="Dhami P."/>
            <person name="Davies J."/>
            <person name="Dunn M."/>
            <person name="Earthrowl M.E."/>
            <person name="Ellington A.E."/>
            <person name="Evans K.A."/>
            <person name="Faulkner L."/>
            <person name="Francis M.D."/>
            <person name="Frankish A."/>
            <person name="Frankland J."/>
            <person name="French L."/>
            <person name="Garner P."/>
            <person name="Garnett J."/>
            <person name="Ghori M.J."/>
            <person name="Gilby L.M."/>
            <person name="Gillson C.J."/>
            <person name="Glithero R.J."/>
            <person name="Grafham D.V."/>
            <person name="Grant M."/>
            <person name="Gribble S."/>
            <person name="Griffiths C."/>
            <person name="Griffiths M.N.D."/>
            <person name="Hall R."/>
            <person name="Halls K.S."/>
            <person name="Hammond S."/>
            <person name="Harley J.L."/>
            <person name="Hart E.A."/>
            <person name="Heath P.D."/>
            <person name="Heathcott R."/>
            <person name="Holmes S.J."/>
            <person name="Howden P.J."/>
            <person name="Howe K.L."/>
            <person name="Howell G.R."/>
            <person name="Huckle E."/>
            <person name="Humphray S.J."/>
            <person name="Humphries M.D."/>
            <person name="Hunt A.R."/>
            <person name="Johnson C.M."/>
            <person name="Joy A.A."/>
            <person name="Kay M."/>
            <person name="Keenan S.J."/>
            <person name="Kimberley A.M."/>
            <person name="King A."/>
            <person name="Laird G.K."/>
            <person name="Langford C."/>
            <person name="Lawlor S."/>
            <person name="Leongamornlert D.A."/>
            <person name="Leversha M."/>
            <person name="Lloyd C.R."/>
            <person name="Lloyd D.M."/>
            <person name="Loveland J.E."/>
            <person name="Lovell J."/>
            <person name="Martin S."/>
            <person name="Mashreghi-Mohammadi M."/>
            <person name="Maslen G.L."/>
            <person name="Matthews L."/>
            <person name="McCann O.T."/>
            <person name="McLaren S.J."/>
            <person name="McLay K."/>
            <person name="McMurray A."/>
            <person name="Moore M.J.F."/>
            <person name="Mullikin J.C."/>
            <person name="Niblett D."/>
            <person name="Nickerson T."/>
            <person name="Novik K.L."/>
            <person name="Oliver K."/>
            <person name="Overton-Larty E.K."/>
            <person name="Parker A."/>
            <person name="Patel R."/>
            <person name="Pearce A.V."/>
            <person name="Peck A.I."/>
            <person name="Phillimore B.J.C.T."/>
            <person name="Phillips S."/>
            <person name="Plumb R.W."/>
            <person name="Porter K.M."/>
            <person name="Ramsey Y."/>
            <person name="Ranby S.A."/>
            <person name="Rice C.M."/>
            <person name="Ross M.T."/>
            <person name="Searle S.M."/>
            <person name="Sehra H.K."/>
            <person name="Sheridan E."/>
            <person name="Skuce C.D."/>
            <person name="Smith S."/>
            <person name="Smith M."/>
            <person name="Spraggon L."/>
            <person name="Squares S.L."/>
            <person name="Steward C.A."/>
            <person name="Sycamore N."/>
            <person name="Tamlyn-Hall G."/>
            <person name="Tester J."/>
            <person name="Theaker A.J."/>
            <person name="Thomas D.W."/>
            <person name="Thorpe A."/>
            <person name="Tracey A."/>
            <person name="Tromans A."/>
            <person name="Tubby B."/>
            <person name="Wall M."/>
            <person name="Wallis J.M."/>
            <person name="West A.P."/>
            <person name="White S.S."/>
            <person name="Whitehead S.L."/>
            <person name="Whittaker H."/>
            <person name="Wild A."/>
            <person name="Willey D.J."/>
            <person name="Wilmer T.E."/>
            <person name="Wood J.M."/>
            <person name="Wray P.W."/>
            <person name="Wyatt J.C."/>
            <person name="Young L."/>
            <person name="Younger R.M."/>
            <person name="Bentley D.R."/>
            <person name="Coulson A."/>
            <person name="Durbin R.M."/>
            <person name="Hubbard T."/>
            <person name="Sulston J.E."/>
            <person name="Dunham I."/>
            <person name="Rogers J."/>
            <person name="Beck S."/>
        </authorList>
    </citation>
    <scope>NUCLEOTIDE SEQUENCE [LARGE SCALE GENOMIC DNA]</scope>
</reference>
<reference key="4">
    <citation type="journal article" date="2004" name="Genome Res.">
        <title>The status, quality, and expansion of the NIH full-length cDNA project: the Mammalian Gene Collection (MGC).</title>
        <authorList>
            <consortium name="The MGC Project Team"/>
        </authorList>
    </citation>
    <scope>NUCLEOTIDE SEQUENCE [LARGE SCALE MRNA]</scope>
    <source>
        <tissue>Lung</tissue>
        <tissue>Urinary bladder</tissue>
    </source>
</reference>
<reference key="5">
    <citation type="journal article" date="2004" name="J. Biol. Chem.">
        <title>Cdt1 phosphorylation by cyclin A-dependent kinases negatively regulates its function without affecting geminin binding.</title>
        <authorList>
            <person name="Sugimoto N."/>
            <person name="Tatsumi Y."/>
            <person name="Tsurumi T."/>
            <person name="Matsukage A."/>
            <person name="Kiyono T."/>
            <person name="Nishitani H."/>
            <person name="Fujita M."/>
        </authorList>
    </citation>
    <scope>FUNCTION</scope>
    <scope>INTERACTION WITH CDT1</scope>
</reference>
<reference key="6">
    <citation type="journal article" date="2008" name="Proc. Natl. Acad. Sci. U.S.A.">
        <title>A quantitative atlas of mitotic phosphorylation.</title>
        <authorList>
            <person name="Dephoure N."/>
            <person name="Zhou C."/>
            <person name="Villen J."/>
            <person name="Beausoleil S.A."/>
            <person name="Bakalarski C.E."/>
            <person name="Elledge S.J."/>
            <person name="Gygi S.P."/>
        </authorList>
    </citation>
    <scope>PHOSPHORYLATION [LARGE SCALE ANALYSIS] AT SER-63 AND SER-64</scope>
    <scope>IDENTIFICATION BY MASS SPECTROMETRY [LARGE SCALE ANALYSIS]</scope>
    <source>
        <tissue>Cervix carcinoma</tissue>
    </source>
</reference>
<reference key="7">
    <citation type="journal article" date="2009" name="Science">
        <title>Lysine acetylation targets protein complexes and co-regulates major cellular functions.</title>
        <authorList>
            <person name="Choudhary C."/>
            <person name="Kumar C."/>
            <person name="Gnad F."/>
            <person name="Nielsen M.L."/>
            <person name="Rehman M."/>
            <person name="Walther T.C."/>
            <person name="Olsen J.V."/>
            <person name="Mann M."/>
        </authorList>
    </citation>
    <scope>ACETYLATION [LARGE SCALE ANALYSIS] AT LYS-27</scope>
    <scope>IDENTIFICATION BY MASS SPECTROMETRY [LARGE SCALE ANALYSIS]</scope>
</reference>
<reference key="8">
    <citation type="journal article" date="2010" name="Mol. Cell">
        <title>HBO1 histone acetylase activity is essential for DNA replication licensing and inhibited by Geminin.</title>
        <authorList>
            <person name="Miotto B."/>
            <person name="Struhl K."/>
        </authorList>
    </citation>
    <scope>FUNCTION</scope>
</reference>
<reference key="9">
    <citation type="journal article" date="2010" name="Sci. Signal.">
        <title>Quantitative phosphoproteomics reveals widespread full phosphorylation site occupancy during mitosis.</title>
        <authorList>
            <person name="Olsen J.V."/>
            <person name="Vermeulen M."/>
            <person name="Santamaria A."/>
            <person name="Kumar C."/>
            <person name="Miller M.L."/>
            <person name="Jensen L.J."/>
            <person name="Gnad F."/>
            <person name="Cox J."/>
            <person name="Jensen T.S."/>
            <person name="Nigg E.A."/>
            <person name="Brunak S."/>
            <person name="Mann M."/>
        </authorList>
    </citation>
    <scope>IDENTIFICATION BY MASS SPECTROMETRY [LARGE SCALE ANALYSIS]</scope>
    <source>
        <tissue>Cervix carcinoma</tissue>
    </source>
</reference>
<reference key="10">
    <citation type="journal article" date="2011" name="J. Biol. Chem.">
        <title>Idas, a novel phylogenetically conserved geminin-related protein, binds to geminin and is required for cell cycle progression.</title>
        <authorList>
            <person name="Pefani D.E."/>
            <person name="Dimaki M."/>
            <person name="Spella M."/>
            <person name="Karantzelis N."/>
            <person name="Mitsiki E."/>
            <person name="Kyrousi C."/>
            <person name="Symeonidou I.E."/>
            <person name="Perrakis A."/>
            <person name="Taraviras S."/>
            <person name="Lygerou Z."/>
        </authorList>
    </citation>
    <scope>SUBCELLULAR LOCATION</scope>
    <scope>INTERACTION WITH IDAS AND CDT1</scope>
</reference>
<reference key="11">
    <citation type="journal article" date="2012" name="Mol. Cell. Biol.">
        <title>Dynamic association of ORCA with prereplicative complex components regulates DNA replication initiation.</title>
        <authorList>
            <person name="Shen Z."/>
            <person name="Chakraborty A."/>
            <person name="Jain A."/>
            <person name="Giri S."/>
            <person name="Ha T."/>
            <person name="Prasanth K.V."/>
            <person name="Prasanth S.G."/>
        </authorList>
    </citation>
    <scope>INTERACTION WITH LRWD1 AND CDT1</scope>
    <scope>PHOSPHORYLATION DURING MITOSIS</scope>
</reference>
<reference key="12">
    <citation type="journal article" date="2013" name="J. Proteome Res.">
        <title>Toward a comprehensive characterization of a human cancer cell phosphoproteome.</title>
        <authorList>
            <person name="Zhou H."/>
            <person name="Di Palma S."/>
            <person name="Preisinger C."/>
            <person name="Peng M."/>
            <person name="Polat A.N."/>
            <person name="Heck A.J."/>
            <person name="Mohammed S."/>
        </authorList>
    </citation>
    <scope>PHOSPHORYLATION [LARGE SCALE ANALYSIS] AT SER-34; SER-36; SER-49 AND SER-64</scope>
    <scope>IDENTIFICATION BY MASS SPECTROMETRY [LARGE SCALE ANALYSIS]</scope>
    <source>
        <tissue>Cervix carcinoma</tissue>
        <tissue>Erythroleukemia</tissue>
    </source>
</reference>
<reference key="13">
    <citation type="journal article" date="2015" name="Am. J. Hum. Genet.">
        <title>De Novo GMNN Mutations Cause Autosomal-Dominant Primordial Dwarfism Associated with Meier-Gorlin Syndrome.</title>
        <authorList>
            <person name="Burrage L.C."/>
            <person name="Charng W.L."/>
            <person name="Eldomery M.K."/>
            <person name="Willer J.R."/>
            <person name="Davis E.E."/>
            <person name="Lugtenberg D."/>
            <person name="Zhu W."/>
            <person name="Leduc M.S."/>
            <person name="Akdemir Z.C."/>
            <person name="Azamian M."/>
            <person name="Zapata G."/>
            <person name="Hernandez P.P."/>
            <person name="Schoots J."/>
            <person name="de Munnik S.A."/>
            <person name="Roepman R."/>
            <person name="Pearring J.N."/>
            <person name="Jhangiani S."/>
            <person name="Katsanis N."/>
            <person name="Vissers L.E."/>
            <person name="Brunner H.G."/>
            <person name="Beaudet A.L."/>
            <person name="Rosenfeld J.A."/>
            <person name="Muzny D.M."/>
            <person name="Gibbs R.A."/>
            <person name="Eng C.M."/>
            <person name="Xia F."/>
            <person name="Lalani S.R."/>
            <person name="Lupski J.R."/>
            <person name="Bongers E.M."/>
            <person name="Yang Y."/>
        </authorList>
    </citation>
    <scope>INVOLVEMENT IN MGORS6</scope>
    <scope>VARIANT MGORS6 ARG-17</scope>
</reference>
<reference key="14">
    <citation type="journal article" date="2004" name="J. Mol. Biol.">
        <title>Crystal structure of the coiled-coil dimerization motif of geminin: structural and functional insights on DNA replication regulation.</title>
        <authorList>
            <person name="Thepaut M."/>
            <person name="Maiorano D."/>
            <person name="Guichou J.-F."/>
            <person name="Auge M.-T."/>
            <person name="Dumas C."/>
            <person name="Mechali M."/>
            <person name="Padilla A."/>
        </authorList>
    </citation>
    <scope>X-RAY CRYSTALLOGRAPHY (1.47 ANGSTROMS) OF 110-145</scope>
    <scope>SUBUNIT</scope>
    <scope>COILED-COIL DOMAIN</scope>
</reference>
<reference key="15">
    <citation type="journal article" date="2004" name="Mol. Cell">
        <title>A dimerized coiled-coil domain and an adjoining part of geminin interact with two sites on Cdt1 for replication inhibition.</title>
        <authorList>
            <person name="Saxena S."/>
            <person name="Yuan P."/>
            <person name="Dhar S.K."/>
            <person name="Senga T."/>
            <person name="Takeda D."/>
            <person name="Robinson H."/>
            <person name="Kornbluth S."/>
            <person name="Swaminathan K."/>
            <person name="Dutta A."/>
        </authorList>
    </citation>
    <scope>X-RAY CRYSTALLOGRAPHY (2.0 ANGSTROMS) OF 70-152</scope>
    <scope>SUBUNIT</scope>
    <scope>INTERACTION WITH CDT1</scope>
    <scope>COILED-COIL DOMAIN</scope>
</reference>
<reference key="16">
    <citation type="journal article" date="2004" name="Nat. Struct. Mol. Biol.">
        <title>Molecular structure of human geminin.</title>
        <authorList>
            <person name="Okorokov A.L."/>
            <person name="Orlova E.V."/>
            <person name="Kingsbury S.R."/>
            <person name="Bagneris C."/>
            <person name="Gohlke U."/>
            <person name="Williams G.H."/>
            <person name="Stoeber K."/>
        </authorList>
    </citation>
    <scope>ELECTRON MICROSCOPY (17.5 ANGSTROMS)</scope>
    <scope>SUBUNIT</scope>
    <scope>COILED-COIL DOMAIN</scope>
</reference>
<reference key="17">
    <citation type="journal article" date="2009" name="Proc. Natl. Acad. Sci. U.S.A.">
        <title>Quaternary structure of the human Cdt1-Geminin complex regulates DNA replication licensing.</title>
        <authorList>
            <person name="De Marco V."/>
            <person name="Gillespie P.J."/>
            <person name="Li A."/>
            <person name="Karantzelis N."/>
            <person name="Christodoulou E."/>
            <person name="Klompmaker R."/>
            <person name="van Gerwen S."/>
            <person name="Fish A."/>
            <person name="Petoukhov M.V."/>
            <person name="Iliou M.S."/>
            <person name="Lygerou Z."/>
            <person name="Medema R.H."/>
            <person name="Blow J.J."/>
            <person name="Svergun D.I."/>
            <person name="Taraviras S."/>
            <person name="Perrakis A."/>
        </authorList>
    </citation>
    <scope>X-RAY CRYSTALLOGRAPHY (3.3 ANGSTROMS)</scope>
    <scope>SUBUNIT</scope>
</reference>
<reference key="18">
    <citation type="journal article" date="2012" name="Proc. Natl. Acad. Sci. U.S.A.">
        <title>Structural basis for homeodomain recognition by the cell-cycle regulator Geminin.</title>
        <authorList>
            <person name="Zhou B."/>
            <person name="Liu C."/>
            <person name="Xu Z."/>
            <person name="Zhu G."/>
        </authorList>
    </citation>
    <scope>STRUCTURE BY NMR OF 171-190 IN COMPLEX WITH HOXC9</scope>
    <scope>FUNCTION</scope>
    <scope>PHOSPHORYLATION AT SER-184</scope>
</reference>
<reference key="19">
    <citation type="journal article" date="2013" name="J. Biol. Chem.">
        <title>The Geminin and Idas coiled coils preferentially form a heterodimer that inhibits Geminin function in DNA replication licensing.</title>
        <authorList>
            <person name="Caillat C."/>
            <person name="Pefani E.D."/>
            <person name="Gillespie P.J."/>
            <person name="Taraviras S."/>
            <person name="Blow J.J."/>
            <person name="Lygerou Z."/>
            <person name="Perrakis A."/>
        </authorList>
    </citation>
    <scope>X-RAY CRYSTALLOGRAPHY (2.89 ANGSTROMS) OF 83-160 IN COMPLEX WITH MCIDAS</scope>
    <scope>SUBUNIT</scope>
    <scope>FUNCTION</scope>
    <scope>COILED-COIL DOMAIN</scope>
</reference>
<protein>
    <recommendedName>
        <fullName>Geminin</fullName>
    </recommendedName>
</protein>
<accession>O75496</accession>
<accession>B3KMM8</accession>
<accession>Q9H1Z1</accession>
<gene>
    <name type="primary">GMNN</name>
</gene>
<name>GEMI_HUMAN</name>
<proteinExistence type="evidence at protein level"/>
<comment type="function">
    <text evidence="3 8 10 12 14">Inhibits DNA replication by preventing the incorporation of MCM complex into pre-replication complex (pre-RC) (PubMed:14993212, PubMed:20129055, PubMed:24064211, PubMed:9635433). It is degraded during the mitotic phase of the cell cycle (PubMed:14993212, PubMed:24064211, PubMed:9635433). Its destruction at the metaphase-anaphase transition permits replication in the succeeding cell cycle (PubMed:14993212, PubMed:24064211, PubMed:9635433). Inhibits histone acetyltransferase activity of KAT7/HBO1 in a CDT1-dependent manner, inhibiting histone H4 acetylation and DNA replication licensing (PubMed:20129055). Inhibits the transcriptional activity of a subset of Hox proteins, enrolling them in cell proliferative control (PubMed:22615398).</text>
</comment>
<comment type="subunit">
    <text evidence="3 4 5 6 7 9 10 11 12">Homotetramer (PubMed:15260975, PubMed:15313623, PubMed:15378034, PubMed:19906994). Interacts with CDT1; this inhibits binding of the MCM complex to origins of replication (PubMed:14993212, PubMed:15260975, PubMed:19906994, PubMed:21543332). The complex with CDT1 exists in two forms, a 'permissive' heterotrimer and an 'inhibitory' heterohexamer (PubMed:14993212, PubMed:15260975, PubMed:19906994). Interacts (via coiled-coil domain) with IDAS (via coiled-coil domain); this targets GMNN to the nucleus (PubMed:21543332). The heterodimer formed by GMNN and MCIDAS has much lower affinity for CDT1 than the GMNN homodimer (PubMed:24064211). Interacts with a subset of Hox proteins, affinity increasing from anterior to posterior types, the strongest interaction being with HOXB1, HOXC9 and HOXD10 (PubMed:22615398). Interacts with LRWD1 from G1/S to mitosis (PubMed:22645314).</text>
</comment>
<comment type="interaction">
    <interactant intactId="EBI-371669">
        <id>O75496</id>
    </interactant>
    <interactant intactId="EBI-10749669">
        <id>Q8IYE0</id>
        <label>CCDC146</label>
    </interactant>
    <organismsDiffer>false</organismsDiffer>
    <experiments>5</experiments>
</comment>
<comment type="interaction">
    <interactant intactId="EBI-371669">
        <id>O75496</id>
    </interactant>
    <interactant intactId="EBI-10247802">
        <id>Q8IYE0-2</id>
        <label>CCDC146</label>
    </interactant>
    <organismsDiffer>false</organismsDiffer>
    <experiments>4</experiments>
</comment>
<comment type="interaction">
    <interactant intactId="EBI-371669">
        <id>O75496</id>
    </interactant>
    <interactant intactId="EBI-375053">
        <id>P42771</id>
        <label>CDKN2A</label>
    </interactant>
    <organismsDiffer>false</organismsDiffer>
    <experiments>2</experiments>
</comment>
<comment type="interaction">
    <interactant intactId="EBI-371669">
        <id>O75496</id>
    </interactant>
    <interactant intactId="EBI-456953">
        <id>Q9H211</id>
        <label>CDT1</label>
    </interactant>
    <organismsDiffer>false</organismsDiffer>
    <experiments>22</experiments>
</comment>
<comment type="interaction">
    <interactant intactId="EBI-371669">
        <id>O75496</id>
    </interactant>
    <interactant intactId="EBI-7251368">
        <id>Q9BZE0</id>
        <label>GLIS2</label>
    </interactant>
    <organismsDiffer>false</organismsDiffer>
    <experiments>3</experiments>
</comment>
<comment type="interaction">
    <interactant intactId="EBI-371669">
        <id>O75496</id>
    </interactant>
    <interactant intactId="EBI-1779423">
        <id>P31274</id>
        <label>HOXC9</label>
    </interactant>
    <organismsDiffer>false</organismsDiffer>
    <experiments>3</experiments>
</comment>
<comment type="interaction">
    <interactant intactId="EBI-371669">
        <id>O75496</id>
    </interactant>
    <interactant intactId="EBI-2556193">
        <id>Q63ZY3</id>
        <label>KANK2</label>
    </interactant>
    <organismsDiffer>false</organismsDiffer>
    <experiments>3</experiments>
</comment>
<comment type="interaction">
    <interactant intactId="EBI-371669">
        <id>O75496</id>
    </interactant>
    <interactant intactId="EBI-739832">
        <id>Q8TBB1</id>
        <label>LNX1</label>
    </interactant>
    <organismsDiffer>false</organismsDiffer>
    <experiments>3</experiments>
</comment>
<comment type="interaction">
    <interactant intactId="EBI-371669">
        <id>O75496</id>
    </interactant>
    <interactant intactId="EBI-3954372">
        <id>D6RGH6</id>
        <label>MCIDAS</label>
    </interactant>
    <organismsDiffer>false</organismsDiffer>
    <experiments>9</experiments>
</comment>
<comment type="interaction">
    <interactant intactId="EBI-371669">
        <id>O75496</id>
    </interactant>
    <interactant intactId="EBI-17635971">
        <id>Q06124-2</id>
        <label>PTPN11</label>
    </interactant>
    <organismsDiffer>false</organismsDiffer>
    <experiments>3</experiments>
</comment>
<comment type="interaction">
    <interactant intactId="EBI-371669">
        <id>O75496</id>
    </interactant>
    <interactant intactId="EBI-2561646">
        <id>Q86UD0</id>
        <label>SAPCD2</label>
    </interactant>
    <organismsDiffer>false</organismsDiffer>
    <experiments>3</experiments>
</comment>
<comment type="interaction">
    <interactant intactId="EBI-371669">
        <id>O75496</id>
    </interactant>
    <interactant intactId="EBI-10177272">
        <id>P15622-3</id>
        <label>ZNF250</label>
    </interactant>
    <organismsDiffer>false</organismsDiffer>
    <experiments>3</experiments>
</comment>
<comment type="interaction">
    <interactant intactId="EBI-371669">
        <id>O75496</id>
    </interactant>
    <interactant intactId="EBI-747580">
        <id>Q8NDP4</id>
        <label>ZNF439</label>
    </interactant>
    <organismsDiffer>false</organismsDiffer>
    <experiments>7</experiments>
</comment>
<comment type="subcellular location">
    <subcellularLocation>
        <location evidence="9">Cytoplasm</location>
    </subcellularLocation>
    <subcellularLocation>
        <location evidence="9">Nucleus</location>
    </subcellularLocation>
    <text evidence="9">Mainly cytoplasmic but can be relocalized to the nucleus.</text>
</comment>
<comment type="developmental stage">
    <text evidence="14">Absent during G1 phase, accumulates during S, G2, and M phases, and disappears at the time of the metaphase-anaphase transition.</text>
</comment>
<comment type="PTM">
    <text evidence="10 11">Phosphorylated during mitosis. Phosphorylation at Ser-184 by CK2 results in enhanced binding to Hox proteins and more potent inhibitory effect on Hox transcriptional activity.</text>
</comment>
<comment type="disease" evidence="13">
    <disease id="DI-04664">
        <name>Meier-Gorlin syndrome 6</name>
        <acronym>MGORS6</acronym>
        <description>A form of Meier-Gorlin syndrome, a syndrome characterized by bilateral microtia, aplasia/hypoplasia of the patellae, and severe intrauterine and postnatal growth retardation with short stature and poor weight gain. Additional clinical findings include anomalies of cranial sutures, microcephaly, apparently low-set and simple ears, microstomia, full lips, highly arched or cleft palate, micrognathia, genitourinary tract anomalies, and various skeletal anomalies. While almost all cases have primordial dwarfism with substantial prenatal and postnatal growth retardation, not all cases have microcephaly, and microtia and absent/hypoplastic patella are absent in some. Despite the presence of microcephaly, intellect is usually normal.</description>
        <dbReference type="MIM" id="616835"/>
    </disease>
    <text>The disease is caused by variants affecting the gene represented in this entry.</text>
</comment>
<comment type="similarity">
    <text evidence="15">Belongs to the geminin family.</text>
</comment>
<keyword id="KW-0002">3D-structure</keyword>
<keyword id="KW-0007">Acetylation</keyword>
<keyword id="KW-0131">Cell cycle</keyword>
<keyword id="KW-0175">Coiled coil</keyword>
<keyword id="KW-0963">Cytoplasm</keyword>
<keyword id="KW-0225">Disease variant</keyword>
<keyword id="KW-0236">DNA replication inhibitor</keyword>
<keyword id="KW-0242">Dwarfism</keyword>
<keyword id="KW-0539">Nucleus</keyword>
<keyword id="KW-0597">Phosphoprotein</keyword>
<keyword id="KW-1267">Proteomics identification</keyword>
<keyword id="KW-1185">Reference proteome</keyword>
<feature type="chain" id="PRO_0000148729" description="Geminin">
    <location>
        <begin position="1"/>
        <end position="209"/>
    </location>
</feature>
<feature type="region of interest" description="Disordered" evidence="1">
    <location>
        <begin position="1"/>
        <end position="79"/>
    </location>
</feature>
<feature type="region of interest" description="Necessary and sufficient for interaction with IDAS and CDT1" evidence="9">
    <location>
        <begin position="82"/>
        <end position="161"/>
    </location>
</feature>
<feature type="region of interest" description="Disordered" evidence="1">
    <location>
        <begin position="164"/>
        <end position="209"/>
    </location>
</feature>
<feature type="region of interest" description="Homeodomain binding">
    <location>
        <begin position="170"/>
        <end position="190"/>
    </location>
</feature>
<feature type="coiled-coil region" evidence="4 5 6 12">
    <location>
        <begin position="94"/>
        <end position="144"/>
    </location>
</feature>
<feature type="compositionally biased region" description="Basic and acidic residues" evidence="1">
    <location>
        <begin position="7"/>
        <end position="16"/>
    </location>
</feature>
<feature type="compositionally biased region" description="Acidic residues" evidence="1">
    <location>
        <begin position="170"/>
        <end position="190"/>
    </location>
</feature>
<feature type="compositionally biased region" description="Polar residues" evidence="1">
    <location>
        <begin position="198"/>
        <end position="209"/>
    </location>
</feature>
<feature type="modified residue" description="N6-acetyllysine" evidence="17">
    <location>
        <position position="27"/>
    </location>
</feature>
<feature type="modified residue" description="Phosphoserine" evidence="18">
    <location>
        <position position="34"/>
    </location>
</feature>
<feature type="modified residue" description="Phosphoserine" evidence="18">
    <location>
        <position position="36"/>
    </location>
</feature>
<feature type="modified residue" description="Phosphoserine" evidence="18">
    <location>
        <position position="49"/>
    </location>
</feature>
<feature type="modified residue" description="Phosphoserine" evidence="16">
    <location>
        <position position="63"/>
    </location>
</feature>
<feature type="modified residue" description="Phosphoserine" evidence="16 18">
    <location>
        <position position="64"/>
    </location>
</feature>
<feature type="modified residue" description="Phosphoserine; by CK2" evidence="10">
    <location>
        <position position="184"/>
    </location>
</feature>
<feature type="sequence variant" id="VAR_033959" description="In dbSNP:rs34891389.">
    <original>N</original>
    <variation>H</variation>
    <location>
        <position position="15"/>
    </location>
</feature>
<feature type="sequence variant" id="VAR_076172" description="In MGORS6; dbSNP:rs864309488." evidence="13">
    <original>K</original>
    <variation>R</variation>
    <location>
        <position position="17"/>
    </location>
</feature>
<feature type="sequence variant" id="VAR_024233" description="In dbSNP:rs1923185." evidence="2">
    <original>N</original>
    <variation>T</variation>
    <location>
        <position position="18"/>
    </location>
</feature>
<feature type="sequence variant" id="VAR_033960" description="In dbSNP:rs2307307.">
    <original>L</original>
    <variation>F</variation>
    <location>
        <position position="48"/>
    </location>
</feature>
<feature type="sequence variant" id="VAR_033961" description="In dbSNP:rs2307306.">
    <original>R</original>
    <variation>W</variation>
    <location>
        <position position="54"/>
    </location>
</feature>
<feature type="sequence variant" id="VAR_053107" description="In dbSNP:rs2307302.">
    <original>S</original>
    <variation>P</variation>
    <location>
        <position position="60"/>
    </location>
</feature>
<feature type="sequence variant" id="VAR_053108" description="In dbSNP:rs2307303.">
    <original>T</original>
    <variation>M</variation>
    <location>
        <position position="203"/>
    </location>
</feature>
<feature type="helix" evidence="19">
    <location>
        <begin position="110"/>
        <end position="142"/>
    </location>
</feature>
<feature type="turn" evidence="20">
    <location>
        <begin position="177"/>
        <end position="179"/>
    </location>
</feature>
<sequence>MNPSMKQKQEEIKENIKNSSVPRRTLKMIQPSASGSLVGRENELSAGLSKRKHRNDHLTSTTSSPGVIVPESSENKNLGGVTQESFDLMIKENPSSQYWKEVAEKRRKALYEALKENEKLHKEIEQKDNEIARLKKENKELAEVAEHVQYMAELIERLNGEPLDNFESLDNQEFDSEEETVEDSLVEDSEIGTCAEGTVSSSTDAKPCI</sequence>
<dbReference type="EMBL" id="AF067855">
    <property type="protein sequence ID" value="AAC39787.1"/>
    <property type="molecule type" value="mRNA"/>
</dbReference>
<dbReference type="EMBL" id="AK021685">
    <property type="protein sequence ID" value="BAG51040.1"/>
    <property type="molecule type" value="mRNA"/>
</dbReference>
<dbReference type="EMBL" id="AL133264">
    <property type="status" value="NOT_ANNOTATED_CDS"/>
    <property type="molecule type" value="Genomic_DNA"/>
</dbReference>
<dbReference type="EMBL" id="BC005185">
    <property type="protein sequence ID" value="AAH05185.1"/>
    <property type="molecule type" value="mRNA"/>
</dbReference>
<dbReference type="EMBL" id="BC005389">
    <property type="protein sequence ID" value="AAH05389.1"/>
    <property type="molecule type" value="mRNA"/>
</dbReference>
<dbReference type="CCDS" id="CCDS4560.1"/>
<dbReference type="RefSeq" id="NP_001238918.1">
    <property type="nucleotide sequence ID" value="NM_001251989.2"/>
</dbReference>
<dbReference type="RefSeq" id="NP_001238919.1">
    <property type="nucleotide sequence ID" value="NM_001251990.2"/>
</dbReference>
<dbReference type="RefSeq" id="NP_001238920.1">
    <property type="nucleotide sequence ID" value="NM_001251991.1"/>
</dbReference>
<dbReference type="RefSeq" id="NP_056979.1">
    <property type="nucleotide sequence ID" value="NM_015895.5"/>
</dbReference>
<dbReference type="RefSeq" id="XP_005249216.1">
    <property type="nucleotide sequence ID" value="XM_005249159.3"/>
</dbReference>
<dbReference type="RefSeq" id="XP_054211527.1">
    <property type="nucleotide sequence ID" value="XM_054355552.1"/>
</dbReference>
<dbReference type="PDB" id="1T6F">
    <property type="method" value="X-ray"/>
    <property type="resolution" value="1.47 A"/>
    <property type="chains" value="A/B=109-145"/>
</dbReference>
<dbReference type="PDB" id="1UII">
    <property type="method" value="X-ray"/>
    <property type="resolution" value="2.00 A"/>
    <property type="chains" value="A/B=70-152"/>
</dbReference>
<dbReference type="PDB" id="2LP0">
    <property type="method" value="NMR"/>
    <property type="chains" value="B=171-190"/>
</dbReference>
<dbReference type="PDB" id="2WVR">
    <property type="method" value="X-ray"/>
    <property type="resolution" value="3.30 A"/>
    <property type="chains" value="A/B=1-209"/>
</dbReference>
<dbReference type="PDB" id="4BRY">
    <property type="method" value="X-ray"/>
    <property type="resolution" value="2.89 A"/>
    <property type="chains" value="A=83-160"/>
</dbReference>
<dbReference type="PDB" id="7KLZ">
    <property type="method" value="X-ray"/>
    <property type="resolution" value="3.40 A"/>
    <property type="chains" value="C/D=195-209"/>
</dbReference>
<dbReference type="PDBsum" id="1T6F"/>
<dbReference type="PDBsum" id="1UII"/>
<dbReference type="PDBsum" id="2LP0"/>
<dbReference type="PDBsum" id="2WVR"/>
<dbReference type="PDBsum" id="4BRY"/>
<dbReference type="PDBsum" id="7KLZ"/>
<dbReference type="BMRB" id="O75496"/>
<dbReference type="SASBDB" id="O75496"/>
<dbReference type="SMR" id="O75496"/>
<dbReference type="BioGRID" id="119246">
    <property type="interactions" value="111"/>
</dbReference>
<dbReference type="ComplexPortal" id="CPX-6094">
    <property type="entry name" value="HOXD10-Geminin transcriptional repressor complex"/>
</dbReference>
<dbReference type="ComplexPortal" id="CPX-659">
    <property type="entry name" value="CDT1-Geminin complex"/>
</dbReference>
<dbReference type="ComplexPortal" id="CPX-660">
    <property type="entry name" value="HOXC9-Geminin transcriptional repressor complex"/>
</dbReference>
<dbReference type="ComplexPortal" id="CPX-661">
    <property type="entry name" value="IDAS-Geminin complex"/>
</dbReference>
<dbReference type="CORUM" id="O75496"/>
<dbReference type="DIP" id="DIP-31088N"/>
<dbReference type="FunCoup" id="O75496">
    <property type="interactions" value="1914"/>
</dbReference>
<dbReference type="IntAct" id="O75496">
    <property type="interactions" value="83"/>
</dbReference>
<dbReference type="MINT" id="O75496"/>
<dbReference type="STRING" id="9606.ENSP00000230056"/>
<dbReference type="ChEMBL" id="CHEMBL1293278"/>
<dbReference type="GlyGen" id="O75496">
    <property type="glycosylation" value="2 sites, 1 O-linked glycan (2 sites)"/>
</dbReference>
<dbReference type="iPTMnet" id="O75496"/>
<dbReference type="MetOSite" id="O75496"/>
<dbReference type="PhosphoSitePlus" id="O75496"/>
<dbReference type="BioMuta" id="GMNN"/>
<dbReference type="jPOST" id="O75496"/>
<dbReference type="MassIVE" id="O75496"/>
<dbReference type="PaxDb" id="9606-ENSP00000230056"/>
<dbReference type="PeptideAtlas" id="O75496"/>
<dbReference type="ProteomicsDB" id="50053"/>
<dbReference type="Pumba" id="O75496"/>
<dbReference type="Antibodypedia" id="25345">
    <property type="antibodies" value="441 antibodies from 35 providers"/>
</dbReference>
<dbReference type="CPTC" id="O75496">
    <property type="antibodies" value="3 antibodies"/>
</dbReference>
<dbReference type="DNASU" id="51053"/>
<dbReference type="Ensembl" id="ENST00000230056.8">
    <property type="protein sequence ID" value="ENSP00000230056.3"/>
    <property type="gene ID" value="ENSG00000112312.10"/>
</dbReference>
<dbReference type="Ensembl" id="ENST00000356509.7">
    <property type="protein sequence ID" value="ENSP00000348902.3"/>
    <property type="gene ID" value="ENSG00000112312.10"/>
</dbReference>
<dbReference type="Ensembl" id="ENST00000620958.4">
    <property type="protein sequence ID" value="ENSP00000477506.1"/>
    <property type="gene ID" value="ENSG00000112312.10"/>
</dbReference>
<dbReference type="GeneID" id="51053"/>
<dbReference type="KEGG" id="hsa:51053"/>
<dbReference type="MANE-Select" id="ENST00000230056.8">
    <property type="protein sequence ID" value="ENSP00000230056.3"/>
    <property type="RefSeq nucleotide sequence ID" value="NM_015895.5"/>
    <property type="RefSeq protein sequence ID" value="NP_056979.1"/>
</dbReference>
<dbReference type="UCSC" id="uc003nem.4">
    <property type="organism name" value="human"/>
</dbReference>
<dbReference type="AGR" id="HGNC:17493"/>
<dbReference type="CTD" id="51053"/>
<dbReference type="DisGeNET" id="51053"/>
<dbReference type="GeneCards" id="GMNN"/>
<dbReference type="HGNC" id="HGNC:17493">
    <property type="gene designation" value="GMNN"/>
</dbReference>
<dbReference type="HPA" id="ENSG00000112312">
    <property type="expression patterns" value="Tissue enhanced (pancreas)"/>
</dbReference>
<dbReference type="MalaCards" id="GMNN"/>
<dbReference type="MIM" id="602842">
    <property type="type" value="gene"/>
</dbReference>
<dbReference type="MIM" id="616835">
    <property type="type" value="phenotype"/>
</dbReference>
<dbReference type="neXtProt" id="NX_O75496"/>
<dbReference type="OpenTargets" id="ENSG00000112312"/>
<dbReference type="Orphanet" id="2554">
    <property type="disease" value="Ear-patella-short stature syndrome"/>
</dbReference>
<dbReference type="PharmGKB" id="PA38455"/>
<dbReference type="VEuPathDB" id="HostDB:ENSG00000112312"/>
<dbReference type="eggNOG" id="ENOG502SDC5">
    <property type="taxonomic scope" value="Eukaryota"/>
</dbReference>
<dbReference type="GeneTree" id="ENSGT00940000153270"/>
<dbReference type="InParanoid" id="O75496"/>
<dbReference type="OMA" id="HWNDQLI"/>
<dbReference type="OrthoDB" id="10043826at2759"/>
<dbReference type="PAN-GO" id="O75496">
    <property type="GO annotations" value="3 GO annotations based on evolutionary models"/>
</dbReference>
<dbReference type="PhylomeDB" id="O75496"/>
<dbReference type="TreeFam" id="TF101171"/>
<dbReference type="PathwayCommons" id="O75496"/>
<dbReference type="Reactome" id="R-HSA-68867">
    <property type="pathway name" value="Assembly of the pre-replicative complex"/>
</dbReference>
<dbReference type="Reactome" id="R-HSA-68962">
    <property type="pathway name" value="Activation of the pre-replicative complex"/>
</dbReference>
<dbReference type="Reactome" id="R-HSA-69052">
    <property type="pathway name" value="Switching of origins to a post-replicative state"/>
</dbReference>
<dbReference type="SignaLink" id="O75496"/>
<dbReference type="SIGNOR" id="O75496"/>
<dbReference type="BioGRID-ORCS" id="51053">
    <property type="hits" value="342 hits in 1161 CRISPR screens"/>
</dbReference>
<dbReference type="CD-CODE" id="8C2F96ED">
    <property type="entry name" value="Centrosome"/>
</dbReference>
<dbReference type="ChiTaRS" id="GMNN">
    <property type="organism name" value="human"/>
</dbReference>
<dbReference type="EvolutionaryTrace" id="O75496"/>
<dbReference type="GeneWiki" id="Geminin"/>
<dbReference type="GenomeRNAi" id="51053"/>
<dbReference type="Pharos" id="O75496">
    <property type="development level" value="Tbio"/>
</dbReference>
<dbReference type="PRO" id="PR:O75496"/>
<dbReference type="Proteomes" id="UP000005640">
    <property type="component" value="Chromosome 6"/>
</dbReference>
<dbReference type="RNAct" id="O75496">
    <property type="molecule type" value="protein"/>
</dbReference>
<dbReference type="Bgee" id="ENSG00000112312">
    <property type="expression patterns" value="Expressed in oocyte and 195 other cell types or tissues"/>
</dbReference>
<dbReference type="ExpressionAtlas" id="O75496">
    <property type="expression patterns" value="baseline and differential"/>
</dbReference>
<dbReference type="GO" id="GO:0005737">
    <property type="term" value="C:cytoplasm"/>
    <property type="evidence" value="ECO:0000314"/>
    <property type="project" value="UniProtKB"/>
</dbReference>
<dbReference type="GO" id="GO:0005829">
    <property type="term" value="C:cytosol"/>
    <property type="evidence" value="ECO:0000314"/>
    <property type="project" value="HPA"/>
</dbReference>
<dbReference type="GO" id="GO:0005654">
    <property type="term" value="C:nucleoplasm"/>
    <property type="evidence" value="ECO:0000314"/>
    <property type="project" value="HPA"/>
</dbReference>
<dbReference type="GO" id="GO:0005634">
    <property type="term" value="C:nucleus"/>
    <property type="evidence" value="ECO:0000314"/>
    <property type="project" value="UniProtKB"/>
</dbReference>
<dbReference type="GO" id="GO:0017053">
    <property type="term" value="C:transcription repressor complex"/>
    <property type="evidence" value="ECO:0000353"/>
    <property type="project" value="ComplexPortal"/>
</dbReference>
<dbReference type="GO" id="GO:0003682">
    <property type="term" value="F:chromatin binding"/>
    <property type="evidence" value="ECO:0000314"/>
    <property type="project" value="CAFA"/>
</dbReference>
<dbReference type="GO" id="GO:0140297">
    <property type="term" value="F:DNA-binding transcription factor binding"/>
    <property type="evidence" value="ECO:0007669"/>
    <property type="project" value="Ensembl"/>
</dbReference>
<dbReference type="GO" id="GO:0042826">
    <property type="term" value="F:histone deacetylase binding"/>
    <property type="evidence" value="ECO:0000353"/>
    <property type="project" value="UniProtKB"/>
</dbReference>
<dbReference type="GO" id="GO:0003714">
    <property type="term" value="F:transcription corepressor activity"/>
    <property type="evidence" value="ECO:0007669"/>
    <property type="project" value="Ensembl"/>
</dbReference>
<dbReference type="GO" id="GO:0009887">
    <property type="term" value="P:animal organ morphogenesis"/>
    <property type="evidence" value="ECO:0007669"/>
    <property type="project" value="Ensembl"/>
</dbReference>
<dbReference type="GO" id="GO:0071163">
    <property type="term" value="P:DNA replication preinitiation complex assembly"/>
    <property type="evidence" value="ECO:0000314"/>
    <property type="project" value="CAFA"/>
</dbReference>
<dbReference type="GO" id="GO:0045786">
    <property type="term" value="P:negative regulation of cell cycle"/>
    <property type="evidence" value="ECO:0000314"/>
    <property type="project" value="UniProtKB"/>
</dbReference>
<dbReference type="GO" id="GO:0008156">
    <property type="term" value="P:negative regulation of DNA replication"/>
    <property type="evidence" value="ECO:0000314"/>
    <property type="project" value="UniProtKB"/>
</dbReference>
<dbReference type="GO" id="GO:2000104">
    <property type="term" value="P:negative regulation of DNA-templated DNA replication"/>
    <property type="evidence" value="ECO:0000314"/>
    <property type="project" value="CAFA"/>
</dbReference>
<dbReference type="GO" id="GO:0045892">
    <property type="term" value="P:negative regulation of DNA-templated transcription"/>
    <property type="evidence" value="ECO:0000314"/>
    <property type="project" value="UniProtKB"/>
</dbReference>
<dbReference type="GO" id="GO:0035563">
    <property type="term" value="P:positive regulation of chromatin binding"/>
    <property type="evidence" value="ECO:0000314"/>
    <property type="project" value="CAFA"/>
</dbReference>
<dbReference type="GO" id="GO:0006275">
    <property type="term" value="P:regulation of DNA replication"/>
    <property type="evidence" value="ECO:0000315"/>
    <property type="project" value="UniProtKB"/>
</dbReference>
<dbReference type="GO" id="GO:0030174">
    <property type="term" value="P:regulation of DNA-templated DNA replication initiation"/>
    <property type="evidence" value="ECO:0000314"/>
    <property type="project" value="ComplexPortal"/>
</dbReference>
<dbReference type="GO" id="GO:0007346">
    <property type="term" value="P:regulation of mitotic cell cycle"/>
    <property type="evidence" value="ECO:0000314"/>
    <property type="project" value="ComplexPortal"/>
</dbReference>
<dbReference type="CDD" id="cd22589">
    <property type="entry name" value="geminin_CC"/>
    <property type="match status" value="1"/>
</dbReference>
<dbReference type="DisProt" id="DP00901"/>
<dbReference type="FunFam" id="1.20.5.1180:FF:000001">
    <property type="entry name" value="Truncated geminin"/>
    <property type="match status" value="1"/>
</dbReference>
<dbReference type="Gene3D" id="1.20.5.1180">
    <property type="entry name" value="Geminin coiled-coil domain"/>
    <property type="match status" value="1"/>
</dbReference>
<dbReference type="IDEAL" id="IID00409"/>
<dbReference type="InterPro" id="IPR022786">
    <property type="entry name" value="Geminin/Multicilin"/>
</dbReference>
<dbReference type="PANTHER" id="PTHR13372">
    <property type="entry name" value="GEMININ"/>
    <property type="match status" value="1"/>
</dbReference>
<dbReference type="PANTHER" id="PTHR13372:SF4">
    <property type="entry name" value="GEMININ"/>
    <property type="match status" value="1"/>
</dbReference>
<dbReference type="Pfam" id="PF07412">
    <property type="entry name" value="Geminin"/>
    <property type="match status" value="1"/>
</dbReference>
<dbReference type="SUPFAM" id="SSF111469">
    <property type="entry name" value="Geminin coiled-coil domain"/>
    <property type="match status" value="1"/>
</dbReference>